<reference key="1">
    <citation type="journal article" date="1997" name="Fungal Genet. Biol.">
        <title>Cloning, sequencing, and transgenic expression of Podospora curvicolla and Sordaria macrospora eEF1A genes: relationship between cytosolic translation and longevity in filamentous fungi.</title>
        <authorList>
            <person name="Gagny B."/>
            <person name="Rossignol M."/>
            <person name="Silar P."/>
        </authorList>
    </citation>
    <scope>NUCLEOTIDE SEQUENCE [GENOMIC DNA]</scope>
    <source>
        <strain>OOO</strain>
    </source>
</reference>
<organism>
    <name type="scientific">Sordaria macrospora</name>
    <dbReference type="NCBI Taxonomy" id="5147"/>
    <lineage>
        <taxon>Eukaryota</taxon>
        <taxon>Fungi</taxon>
        <taxon>Dikarya</taxon>
        <taxon>Ascomycota</taxon>
        <taxon>Pezizomycotina</taxon>
        <taxon>Sordariomycetes</taxon>
        <taxon>Sordariomycetidae</taxon>
        <taxon>Sordariales</taxon>
        <taxon>Sordariaceae</taxon>
        <taxon>Sordaria</taxon>
    </lineage>
</organism>
<evidence type="ECO:0000250" key="1"/>
<evidence type="ECO:0000250" key="2">
    <source>
        <dbReference type="UniProtKB" id="P02994"/>
    </source>
</evidence>
<evidence type="ECO:0000305" key="3"/>
<accession>Q09069</accession>
<keyword id="KW-0963">Cytoplasm</keyword>
<keyword id="KW-0251">Elongation factor</keyword>
<keyword id="KW-0342">GTP-binding</keyword>
<keyword id="KW-0488">Methylation</keyword>
<keyword id="KW-0547">Nucleotide-binding</keyword>
<keyword id="KW-0648">Protein biosynthesis</keyword>
<protein>
    <recommendedName>
        <fullName>Elongation factor 1-alpha</fullName>
        <shortName>EF-1-alpha</shortName>
    </recommendedName>
</protein>
<dbReference type="EMBL" id="X96615">
    <property type="protein sequence ID" value="CAA65435.1"/>
    <property type="molecule type" value="Genomic_DNA"/>
</dbReference>
<dbReference type="RefSeq" id="XP_003347147.1">
    <property type="nucleotide sequence ID" value="XM_003347099.1"/>
</dbReference>
<dbReference type="SMR" id="Q09069"/>
<dbReference type="KEGG" id="smp:10804560"/>
<dbReference type="VEuPathDB" id="FungiDB:SMAC_05446"/>
<dbReference type="OMA" id="AIRDMGM"/>
<dbReference type="GO" id="GO:0005737">
    <property type="term" value="C:cytoplasm"/>
    <property type="evidence" value="ECO:0007669"/>
    <property type="project" value="UniProtKB-SubCell"/>
</dbReference>
<dbReference type="GO" id="GO:0005525">
    <property type="term" value="F:GTP binding"/>
    <property type="evidence" value="ECO:0007669"/>
    <property type="project" value="UniProtKB-KW"/>
</dbReference>
<dbReference type="GO" id="GO:0003924">
    <property type="term" value="F:GTPase activity"/>
    <property type="evidence" value="ECO:0007669"/>
    <property type="project" value="InterPro"/>
</dbReference>
<dbReference type="GO" id="GO:0003746">
    <property type="term" value="F:translation elongation factor activity"/>
    <property type="evidence" value="ECO:0007669"/>
    <property type="project" value="UniProtKB-KW"/>
</dbReference>
<dbReference type="CDD" id="cd01883">
    <property type="entry name" value="EF1_alpha"/>
    <property type="match status" value="1"/>
</dbReference>
<dbReference type="CDD" id="cd03693">
    <property type="entry name" value="EF1_alpha_II"/>
    <property type="match status" value="1"/>
</dbReference>
<dbReference type="CDD" id="cd03705">
    <property type="entry name" value="EF1_alpha_III"/>
    <property type="match status" value="1"/>
</dbReference>
<dbReference type="FunFam" id="2.40.30.10:FF:000003">
    <property type="entry name" value="Elongation factor 1-alpha"/>
    <property type="match status" value="1"/>
</dbReference>
<dbReference type="FunFam" id="2.40.30.10:FF:000005">
    <property type="entry name" value="Elongation factor 1-alpha"/>
    <property type="match status" value="1"/>
</dbReference>
<dbReference type="FunFam" id="3.40.50.300:FF:000211">
    <property type="entry name" value="Elongation factor 1-alpha"/>
    <property type="match status" value="1"/>
</dbReference>
<dbReference type="Gene3D" id="3.40.50.300">
    <property type="entry name" value="P-loop containing nucleotide triphosphate hydrolases"/>
    <property type="match status" value="1"/>
</dbReference>
<dbReference type="Gene3D" id="2.40.30.10">
    <property type="entry name" value="Translation factors"/>
    <property type="match status" value="2"/>
</dbReference>
<dbReference type="HAMAP" id="MF_00118_A">
    <property type="entry name" value="EF_Tu_A"/>
    <property type="match status" value="1"/>
</dbReference>
<dbReference type="InterPro" id="IPR004161">
    <property type="entry name" value="EFTu-like_2"/>
</dbReference>
<dbReference type="InterPro" id="IPR031157">
    <property type="entry name" value="G_TR_CS"/>
</dbReference>
<dbReference type="InterPro" id="IPR054696">
    <property type="entry name" value="GTP-eEF1A_C"/>
</dbReference>
<dbReference type="InterPro" id="IPR027417">
    <property type="entry name" value="P-loop_NTPase"/>
</dbReference>
<dbReference type="InterPro" id="IPR000795">
    <property type="entry name" value="T_Tr_GTP-bd_dom"/>
</dbReference>
<dbReference type="InterPro" id="IPR050100">
    <property type="entry name" value="TRAFAC_GTPase_members"/>
</dbReference>
<dbReference type="InterPro" id="IPR009000">
    <property type="entry name" value="Transl_B-barrel_sf"/>
</dbReference>
<dbReference type="InterPro" id="IPR009001">
    <property type="entry name" value="Transl_elong_EF1A/Init_IF2_C"/>
</dbReference>
<dbReference type="InterPro" id="IPR004539">
    <property type="entry name" value="Transl_elong_EF1A_euk/arc"/>
</dbReference>
<dbReference type="NCBIfam" id="TIGR00483">
    <property type="entry name" value="EF-1_alpha"/>
    <property type="match status" value="1"/>
</dbReference>
<dbReference type="NCBIfam" id="NF008969">
    <property type="entry name" value="PRK12317.1"/>
    <property type="match status" value="1"/>
</dbReference>
<dbReference type="PANTHER" id="PTHR23115">
    <property type="entry name" value="TRANSLATION FACTOR"/>
    <property type="match status" value="1"/>
</dbReference>
<dbReference type="Pfam" id="PF22594">
    <property type="entry name" value="GTP-eEF1A_C"/>
    <property type="match status" value="1"/>
</dbReference>
<dbReference type="Pfam" id="PF00009">
    <property type="entry name" value="GTP_EFTU"/>
    <property type="match status" value="1"/>
</dbReference>
<dbReference type="Pfam" id="PF03144">
    <property type="entry name" value="GTP_EFTU_D2"/>
    <property type="match status" value="1"/>
</dbReference>
<dbReference type="PRINTS" id="PR00315">
    <property type="entry name" value="ELONGATNFCT"/>
</dbReference>
<dbReference type="SUPFAM" id="SSF50465">
    <property type="entry name" value="EF-Tu/eEF-1alpha/eIF2-gamma C-terminal domain"/>
    <property type="match status" value="1"/>
</dbReference>
<dbReference type="SUPFAM" id="SSF52540">
    <property type="entry name" value="P-loop containing nucleoside triphosphate hydrolases"/>
    <property type="match status" value="1"/>
</dbReference>
<dbReference type="SUPFAM" id="SSF50447">
    <property type="entry name" value="Translation proteins"/>
    <property type="match status" value="1"/>
</dbReference>
<dbReference type="PROSITE" id="PS00301">
    <property type="entry name" value="G_TR_1"/>
    <property type="match status" value="1"/>
</dbReference>
<dbReference type="PROSITE" id="PS51722">
    <property type="entry name" value="G_TR_2"/>
    <property type="match status" value="1"/>
</dbReference>
<feature type="initiator methionine" description="Removed" evidence="2">
    <location>
        <position position="1"/>
    </location>
</feature>
<feature type="chain" id="PRO_0000090970" description="Elongation factor 1-alpha">
    <location>
        <begin position="2"/>
        <end position="460"/>
    </location>
</feature>
<feature type="domain" description="tr-type G">
    <location>
        <begin position="6"/>
        <end position="241"/>
    </location>
</feature>
<feature type="region of interest" description="G1" evidence="1">
    <location>
        <begin position="15"/>
        <end position="22"/>
    </location>
</feature>
<feature type="region of interest" description="G2" evidence="1">
    <location>
        <begin position="71"/>
        <end position="75"/>
    </location>
</feature>
<feature type="region of interest" description="G3" evidence="1">
    <location>
        <begin position="92"/>
        <end position="95"/>
    </location>
</feature>
<feature type="region of interest" description="G4" evidence="1">
    <location>
        <begin position="154"/>
        <end position="157"/>
    </location>
</feature>
<feature type="region of interest" description="G5" evidence="1">
    <location>
        <begin position="193"/>
        <end position="195"/>
    </location>
</feature>
<feature type="binding site" evidence="1">
    <location>
        <begin position="15"/>
        <end position="22"/>
    </location>
    <ligand>
        <name>GTP</name>
        <dbReference type="ChEBI" id="CHEBI:37565"/>
    </ligand>
</feature>
<feature type="binding site" evidence="1">
    <location>
        <begin position="92"/>
        <end position="96"/>
    </location>
    <ligand>
        <name>GTP</name>
        <dbReference type="ChEBI" id="CHEBI:37565"/>
    </ligand>
</feature>
<feature type="binding site" evidence="1">
    <location>
        <begin position="154"/>
        <end position="157"/>
    </location>
    <ligand>
        <name>GTP</name>
        <dbReference type="ChEBI" id="CHEBI:37565"/>
    </ligand>
</feature>
<feature type="modified residue" description="N,N,N-trimethylglycine" evidence="2">
    <location>
        <position position="2"/>
    </location>
</feature>
<feature type="modified residue" description="N6,N6-dimethyllysine; alternate" evidence="2">
    <location>
        <position position="3"/>
    </location>
</feature>
<feature type="modified residue" description="N6-methyllysine; alternate" evidence="2">
    <location>
        <position position="3"/>
    </location>
</feature>
<feature type="modified residue" description="N6-methyllysine" evidence="2">
    <location>
        <position position="31"/>
    </location>
</feature>
<feature type="modified residue" description="N6,N6,N6-trimethyllysine" evidence="2">
    <location>
        <position position="80"/>
    </location>
</feature>
<feature type="modified residue" description="N6,N6-dimethyllysine; alternate" evidence="2">
    <location>
        <position position="317"/>
    </location>
</feature>
<feature type="modified residue" description="N6-methyllysine; alternate" evidence="2">
    <location>
        <position position="317"/>
    </location>
</feature>
<feature type="modified residue" description="N6-methyllysine" evidence="2">
    <location>
        <position position="391"/>
    </location>
</feature>
<gene>
    <name type="primary">TEF</name>
</gene>
<name>EF1A_SORMA</name>
<sequence>MGKEDKAHINVVVIGHVDSGKSTTTGHLIYKCGGIDKRTIEKFEKEAAELGKGSFKYAWVLDKLKAERERGITIDIALWKFETPKYYVTVIDAPGHRDFIKNMITGTSQADCAILIIAAGTGEFEAGISKDGQTREHALLAYTLGVKQLIVAINKMDTTQWSQARFEEIIKETKNFIKKVGYNPATVAFVPISGFNGDNMLEASTNCPWYKGWEKETKAGKSTGKTLLEAIDAIEQPKRPTDKPLRLPLQDVYKIGGIGTVPVGRIETGVLKPGMVVTFAPSNVTTEVKSVEMHHEQLAQGVPGDNVGFNVKNVSVKDIRRGNVAGDSKNDPPVGAASFTAQVIVLNHPGQVGAGYAPVLDCHTAHIACKFAELLEKIDRRTGKAVETSPKFIKSGDAAIVKMIPSKPMCVEAFTDYPPLGRFAVRDMRQTVAVGVIKAVDKTQAVAGKVTKSAAKAAKK</sequence>
<comment type="function">
    <text>This protein promotes the GTP-dependent binding of aminoacyl-tRNA to the A-site of ribosomes during protein biosynthesis.</text>
</comment>
<comment type="subcellular location">
    <subcellularLocation>
        <location>Cytoplasm</location>
    </subcellularLocation>
</comment>
<comment type="similarity">
    <text evidence="3">Belongs to the TRAFAC class translation factor GTPase superfamily. Classic translation factor GTPase family. EF-Tu/EF-1A subfamily.</text>
</comment>
<proteinExistence type="inferred from homology"/>